<gene>
    <name evidence="1" type="primary">hslU</name>
    <name type="ordered locus">RSc0042</name>
    <name type="ORF">RS01865</name>
</gene>
<dbReference type="EMBL" id="AL646052">
    <property type="protein sequence ID" value="CAD13570.1"/>
    <property type="molecule type" value="Genomic_DNA"/>
</dbReference>
<dbReference type="RefSeq" id="WP_011000009.1">
    <property type="nucleotide sequence ID" value="NC_003295.1"/>
</dbReference>
<dbReference type="SMR" id="Q8Y3D8"/>
<dbReference type="STRING" id="267608.RSc0042"/>
<dbReference type="EnsemblBacteria" id="CAD13570">
    <property type="protein sequence ID" value="CAD13570"/>
    <property type="gene ID" value="RSc0042"/>
</dbReference>
<dbReference type="KEGG" id="rso:RSc0042"/>
<dbReference type="eggNOG" id="COG1220">
    <property type="taxonomic scope" value="Bacteria"/>
</dbReference>
<dbReference type="HOGENOM" id="CLU_033123_0_0_4"/>
<dbReference type="Proteomes" id="UP000001436">
    <property type="component" value="Chromosome"/>
</dbReference>
<dbReference type="GO" id="GO:0009376">
    <property type="term" value="C:HslUV protease complex"/>
    <property type="evidence" value="ECO:0007669"/>
    <property type="project" value="UniProtKB-UniRule"/>
</dbReference>
<dbReference type="GO" id="GO:0005524">
    <property type="term" value="F:ATP binding"/>
    <property type="evidence" value="ECO:0007669"/>
    <property type="project" value="UniProtKB-UniRule"/>
</dbReference>
<dbReference type="GO" id="GO:0016887">
    <property type="term" value="F:ATP hydrolysis activity"/>
    <property type="evidence" value="ECO:0007669"/>
    <property type="project" value="InterPro"/>
</dbReference>
<dbReference type="GO" id="GO:0008233">
    <property type="term" value="F:peptidase activity"/>
    <property type="evidence" value="ECO:0007669"/>
    <property type="project" value="InterPro"/>
</dbReference>
<dbReference type="GO" id="GO:0036402">
    <property type="term" value="F:proteasome-activating activity"/>
    <property type="evidence" value="ECO:0007669"/>
    <property type="project" value="UniProtKB-UniRule"/>
</dbReference>
<dbReference type="GO" id="GO:0043335">
    <property type="term" value="P:protein unfolding"/>
    <property type="evidence" value="ECO:0007669"/>
    <property type="project" value="UniProtKB-UniRule"/>
</dbReference>
<dbReference type="GO" id="GO:0051603">
    <property type="term" value="P:proteolysis involved in protein catabolic process"/>
    <property type="evidence" value="ECO:0007669"/>
    <property type="project" value="TreeGrafter"/>
</dbReference>
<dbReference type="CDD" id="cd19498">
    <property type="entry name" value="RecA-like_HslU"/>
    <property type="match status" value="1"/>
</dbReference>
<dbReference type="FunFam" id="1.10.8.10:FF:000028">
    <property type="entry name" value="ATP-dependent protease ATPase subunit HslU"/>
    <property type="match status" value="1"/>
</dbReference>
<dbReference type="FunFam" id="3.40.50.300:FF:000213">
    <property type="entry name" value="ATP-dependent protease ATPase subunit HslU"/>
    <property type="match status" value="1"/>
</dbReference>
<dbReference type="FunFam" id="3.40.50.300:FF:000220">
    <property type="entry name" value="ATP-dependent protease ATPase subunit HslU"/>
    <property type="match status" value="1"/>
</dbReference>
<dbReference type="Gene3D" id="1.10.8.60">
    <property type="match status" value="1"/>
</dbReference>
<dbReference type="Gene3D" id="1.10.8.10">
    <property type="entry name" value="DNA helicase RuvA subunit, C-terminal domain"/>
    <property type="match status" value="2"/>
</dbReference>
<dbReference type="Gene3D" id="3.40.50.300">
    <property type="entry name" value="P-loop containing nucleotide triphosphate hydrolases"/>
    <property type="match status" value="2"/>
</dbReference>
<dbReference type="HAMAP" id="MF_00249">
    <property type="entry name" value="HslU"/>
    <property type="match status" value="1"/>
</dbReference>
<dbReference type="InterPro" id="IPR003593">
    <property type="entry name" value="AAA+_ATPase"/>
</dbReference>
<dbReference type="InterPro" id="IPR050052">
    <property type="entry name" value="ATP-dep_Clp_protease_ClpX"/>
</dbReference>
<dbReference type="InterPro" id="IPR003959">
    <property type="entry name" value="ATPase_AAA_core"/>
</dbReference>
<dbReference type="InterPro" id="IPR019489">
    <property type="entry name" value="Clp_ATPase_C"/>
</dbReference>
<dbReference type="InterPro" id="IPR004491">
    <property type="entry name" value="HslU"/>
</dbReference>
<dbReference type="InterPro" id="IPR027417">
    <property type="entry name" value="P-loop_NTPase"/>
</dbReference>
<dbReference type="NCBIfam" id="TIGR00390">
    <property type="entry name" value="hslU"/>
    <property type="match status" value="1"/>
</dbReference>
<dbReference type="NCBIfam" id="NF003544">
    <property type="entry name" value="PRK05201.1"/>
    <property type="match status" value="1"/>
</dbReference>
<dbReference type="PANTHER" id="PTHR48102">
    <property type="entry name" value="ATP-DEPENDENT CLP PROTEASE ATP-BINDING SUBUNIT CLPX-LIKE, MITOCHONDRIAL-RELATED"/>
    <property type="match status" value="1"/>
</dbReference>
<dbReference type="PANTHER" id="PTHR48102:SF3">
    <property type="entry name" value="ATP-DEPENDENT PROTEASE ATPASE SUBUNIT HSLU"/>
    <property type="match status" value="1"/>
</dbReference>
<dbReference type="Pfam" id="PF00004">
    <property type="entry name" value="AAA"/>
    <property type="match status" value="1"/>
</dbReference>
<dbReference type="Pfam" id="PF07724">
    <property type="entry name" value="AAA_2"/>
    <property type="match status" value="1"/>
</dbReference>
<dbReference type="SMART" id="SM00382">
    <property type="entry name" value="AAA"/>
    <property type="match status" value="1"/>
</dbReference>
<dbReference type="SMART" id="SM01086">
    <property type="entry name" value="ClpB_D2-small"/>
    <property type="match status" value="1"/>
</dbReference>
<dbReference type="SUPFAM" id="SSF52540">
    <property type="entry name" value="P-loop containing nucleoside triphosphate hydrolases"/>
    <property type="match status" value="1"/>
</dbReference>
<protein>
    <recommendedName>
        <fullName evidence="1">ATP-dependent protease ATPase subunit HslU</fullName>
    </recommendedName>
    <alternativeName>
        <fullName evidence="1">Unfoldase HslU</fullName>
    </alternativeName>
</protein>
<reference key="1">
    <citation type="journal article" date="2002" name="Nature">
        <title>Genome sequence of the plant pathogen Ralstonia solanacearum.</title>
        <authorList>
            <person name="Salanoubat M."/>
            <person name="Genin S."/>
            <person name="Artiguenave F."/>
            <person name="Gouzy J."/>
            <person name="Mangenot S."/>
            <person name="Arlat M."/>
            <person name="Billault A."/>
            <person name="Brottier P."/>
            <person name="Camus J.-C."/>
            <person name="Cattolico L."/>
            <person name="Chandler M."/>
            <person name="Choisne N."/>
            <person name="Claudel-Renard C."/>
            <person name="Cunnac S."/>
            <person name="Demange N."/>
            <person name="Gaspin C."/>
            <person name="Lavie M."/>
            <person name="Moisan A."/>
            <person name="Robert C."/>
            <person name="Saurin W."/>
            <person name="Schiex T."/>
            <person name="Siguier P."/>
            <person name="Thebault P."/>
            <person name="Whalen M."/>
            <person name="Wincker P."/>
            <person name="Levy M."/>
            <person name="Weissenbach J."/>
            <person name="Boucher C.A."/>
        </authorList>
    </citation>
    <scope>NUCLEOTIDE SEQUENCE [LARGE SCALE GENOMIC DNA]</scope>
    <source>
        <strain>ATCC BAA-1114 / GMI1000</strain>
    </source>
</reference>
<feature type="chain" id="PRO_0000160534" description="ATP-dependent protease ATPase subunit HslU">
    <location>
        <begin position="1"/>
        <end position="443"/>
    </location>
</feature>
<feature type="binding site" evidence="1">
    <location>
        <position position="19"/>
    </location>
    <ligand>
        <name>ATP</name>
        <dbReference type="ChEBI" id="CHEBI:30616"/>
    </ligand>
</feature>
<feature type="binding site" evidence="1">
    <location>
        <begin position="61"/>
        <end position="66"/>
    </location>
    <ligand>
        <name>ATP</name>
        <dbReference type="ChEBI" id="CHEBI:30616"/>
    </ligand>
</feature>
<feature type="binding site" evidence="1">
    <location>
        <position position="256"/>
    </location>
    <ligand>
        <name>ATP</name>
        <dbReference type="ChEBI" id="CHEBI:30616"/>
    </ligand>
</feature>
<feature type="binding site" evidence="1">
    <location>
        <position position="321"/>
    </location>
    <ligand>
        <name>ATP</name>
        <dbReference type="ChEBI" id="CHEBI:30616"/>
    </ligand>
</feature>
<feature type="binding site" evidence="1">
    <location>
        <position position="393"/>
    </location>
    <ligand>
        <name>ATP</name>
        <dbReference type="ChEBI" id="CHEBI:30616"/>
    </ligand>
</feature>
<keyword id="KW-0067">ATP-binding</keyword>
<keyword id="KW-0143">Chaperone</keyword>
<keyword id="KW-0963">Cytoplasm</keyword>
<keyword id="KW-0547">Nucleotide-binding</keyword>
<keyword id="KW-1185">Reference proteome</keyword>
<proteinExistence type="inferred from homology"/>
<evidence type="ECO:0000255" key="1">
    <source>
        <dbReference type="HAMAP-Rule" id="MF_00249"/>
    </source>
</evidence>
<comment type="function">
    <text evidence="1">ATPase subunit of a proteasome-like degradation complex; this subunit has chaperone activity. The binding of ATP and its subsequent hydrolysis by HslU are essential for unfolding of protein substrates subsequently hydrolyzed by HslV. HslU recognizes the N-terminal part of its protein substrates and unfolds these before they are guided to HslV for hydrolysis.</text>
</comment>
<comment type="subunit">
    <text evidence="1">A double ring-shaped homohexamer of HslV is capped on each side by a ring-shaped HslU homohexamer. The assembly of the HslU/HslV complex is dependent on binding of ATP.</text>
</comment>
<comment type="subcellular location">
    <subcellularLocation>
        <location evidence="1">Cytoplasm</location>
    </subcellularLocation>
</comment>
<comment type="similarity">
    <text evidence="1">Belongs to the ClpX chaperone family. HslU subfamily.</text>
</comment>
<sequence length="443" mass="49572">MPETMTPSEIVSELDKHIIGQQKAKKAVAVALRNRWRRQQVADPLRQEITPKNILMIGPTGVGKTEIARRLAKLADAPFIKIEATKFTEVGYVGRDVDTIVRDLAEMAVKQTRESEMKKVRAKAEDAAEDRLLDVLIPPPRDIGFAQPEEKDSNARQVFRKKLREGQLDDKEIELEVAAGMPGMDIMGPPGMEEMTEQIRSMFAGLGQGKKHRRKMKVHEAFKLLVEEEAGKLVNEEELKHKAIANVEQNGIVFLDEIDKITSRSEHGGGEVSRQGVQRDLLPLVEGTTVSTKYGMIKTDHILFIASGAFQLSKPSDLIPELQGRFPIRVELDSLSVDDFQAILTQTDASLTKQYQALMKTEDVELVFADDGIRRLAEIAFSVNEKVENIGARRLYTVMERLLEDLSFHAHKSSGETVTIDAAYVDSRLNELAGSEDLSRYVL</sequence>
<organism>
    <name type="scientific">Ralstonia nicotianae (strain ATCC BAA-1114 / GMI1000)</name>
    <name type="common">Ralstonia solanacearum</name>
    <dbReference type="NCBI Taxonomy" id="267608"/>
    <lineage>
        <taxon>Bacteria</taxon>
        <taxon>Pseudomonadati</taxon>
        <taxon>Pseudomonadota</taxon>
        <taxon>Betaproteobacteria</taxon>
        <taxon>Burkholderiales</taxon>
        <taxon>Burkholderiaceae</taxon>
        <taxon>Ralstonia</taxon>
        <taxon>Ralstonia solanacearum species complex</taxon>
    </lineage>
</organism>
<accession>Q8Y3D8</accession>
<name>HSLU_RALN1</name>